<reference key="1">
    <citation type="submission" date="2006-12" db="EMBL/GenBank/DDBJ databases">
        <title>Complete sequence of chromosome 1 of Acidovorax sp. JS42.</title>
        <authorList>
            <person name="Copeland A."/>
            <person name="Lucas S."/>
            <person name="Lapidus A."/>
            <person name="Barry K."/>
            <person name="Detter J.C."/>
            <person name="Glavina del Rio T."/>
            <person name="Dalin E."/>
            <person name="Tice H."/>
            <person name="Pitluck S."/>
            <person name="Chertkov O."/>
            <person name="Brettin T."/>
            <person name="Bruce D."/>
            <person name="Han C."/>
            <person name="Tapia R."/>
            <person name="Gilna P."/>
            <person name="Schmutz J."/>
            <person name="Larimer F."/>
            <person name="Land M."/>
            <person name="Hauser L."/>
            <person name="Kyrpides N."/>
            <person name="Kim E."/>
            <person name="Stahl D."/>
            <person name="Richardson P."/>
        </authorList>
    </citation>
    <scope>NUCLEOTIDE SEQUENCE [LARGE SCALE GENOMIC DNA]</scope>
    <source>
        <strain>JS42</strain>
    </source>
</reference>
<gene>
    <name evidence="1" type="primary">mnmC</name>
    <name type="ordered locus">Ajs_1796</name>
</gene>
<sequence length="639" mass="68618">MSEPIEWLEDGTPYSPRFSDRYHSEHGGLEQARGTFLAGCGLPQAWQNQPQWRVLETGFGLGLNFLVTWAAWRADPHRPQRLHFVSCEAWPVSAADLLRAAPIDSTLQSLAQQLAAQYWGLLPGVHRLSFDGGQVLLTLYIGDAQALLRQQQPTADSVYLDGFDPQHNPQMWDIHTLKAVARCCRRGTRLATWTVARGVRDGLVQCGFEVQKVPGVRPKRDNLQATYAPRWEPRAGQPVLPDATVAAPARCLVVGAGLAGAAVAASLAHRGWQVQVLDRADHPAAGASGLPAGVFAPNVSQDDNLISRLSRAGVRITLNTLAQLPAETRGTDWSACGTLEHRVDGTTGLAWSDGPGLDWSRPATPAQLQANGLSADTVACWHEHAGWVRPPQLIAHLLNDPAIRWRGSAAVAELRRTTVDGQPLWQALDAEGHVLAEAELAVVCAGHHTGPLTHAHWPMNPLRGQLAWGLHAQAPAGAPWPPQPLNGNGNLVPRVPLQDGAGWVLGSTFERLKTALPPSPDDHAKGLATNQAKLHALLPPLGAAMDAAFSQAATAPDGPVRTWAAVRCGALDRRPIVGPVDSVRQPGLWLCTAMGARGLTLSLLCGELIAARLHSEPLPLDAPLARALSSERWLGYEPQ</sequence>
<comment type="function">
    <text evidence="1">Catalyzes the last two steps in the biosynthesis of 5-methylaminomethyl-2-thiouridine (mnm(5)s(2)U) at the wobble position (U34) in tRNA. Catalyzes the FAD-dependent demodification of cmnm(5)s(2)U34 to nm(5)s(2)U34, followed by the transfer of a methyl group from S-adenosyl-L-methionine to nm(5)s(2)U34, to form mnm(5)s(2)U34.</text>
</comment>
<comment type="catalytic activity">
    <reaction evidence="1">
        <text>5-aminomethyl-2-thiouridine(34) in tRNA + S-adenosyl-L-methionine = 5-methylaminomethyl-2-thiouridine(34) in tRNA + S-adenosyl-L-homocysteine + H(+)</text>
        <dbReference type="Rhea" id="RHEA:19569"/>
        <dbReference type="Rhea" id="RHEA-COMP:10195"/>
        <dbReference type="Rhea" id="RHEA-COMP:10197"/>
        <dbReference type="ChEBI" id="CHEBI:15378"/>
        <dbReference type="ChEBI" id="CHEBI:57856"/>
        <dbReference type="ChEBI" id="CHEBI:59789"/>
        <dbReference type="ChEBI" id="CHEBI:74454"/>
        <dbReference type="ChEBI" id="CHEBI:74455"/>
        <dbReference type="EC" id="2.1.1.61"/>
    </reaction>
</comment>
<comment type="cofactor">
    <cofactor evidence="1">
        <name>FAD</name>
        <dbReference type="ChEBI" id="CHEBI:57692"/>
    </cofactor>
</comment>
<comment type="subcellular location">
    <subcellularLocation>
        <location evidence="1">Cytoplasm</location>
    </subcellularLocation>
</comment>
<comment type="similarity">
    <text evidence="1">In the N-terminal section; belongs to the methyltransferase superfamily. tRNA (mnm(5)s(2)U34)-methyltransferase family.</text>
</comment>
<comment type="similarity">
    <text evidence="1">In the C-terminal section; belongs to the DAO family.</text>
</comment>
<keyword id="KW-0963">Cytoplasm</keyword>
<keyword id="KW-0274">FAD</keyword>
<keyword id="KW-0285">Flavoprotein</keyword>
<keyword id="KW-0489">Methyltransferase</keyword>
<keyword id="KW-0511">Multifunctional enzyme</keyword>
<keyword id="KW-0560">Oxidoreductase</keyword>
<keyword id="KW-0949">S-adenosyl-L-methionine</keyword>
<keyword id="KW-0808">Transferase</keyword>
<keyword id="KW-0819">tRNA processing</keyword>
<protein>
    <recommendedName>
        <fullName evidence="1">tRNA 5-methylaminomethyl-2-thiouridine biosynthesis bifunctional protein MnmC</fullName>
        <shortName evidence="1">tRNA mnm(5)s(2)U biosynthesis bifunctional protein</shortName>
    </recommendedName>
    <domain>
        <recommendedName>
            <fullName evidence="1">tRNA (mnm(5)s(2)U34)-methyltransferase</fullName>
            <ecNumber evidence="1">2.1.1.61</ecNumber>
        </recommendedName>
    </domain>
    <domain>
        <recommendedName>
            <fullName evidence="1">FAD-dependent cmnm(5)s(2)U34 oxidoreductase</fullName>
            <ecNumber evidence="1">1.5.-.-</ecNumber>
        </recommendedName>
    </domain>
</protein>
<proteinExistence type="inferred from homology"/>
<feature type="chain" id="PRO_0000347932" description="tRNA 5-methylaminomethyl-2-thiouridine biosynthesis bifunctional protein MnmC">
    <location>
        <begin position="1"/>
        <end position="639"/>
    </location>
</feature>
<feature type="region of interest" description="tRNA (mnm(5)s(2)U34)-methyltransferase">
    <location>
        <begin position="1"/>
        <end position="228"/>
    </location>
</feature>
<feature type="region of interest" description="FAD-dependent cmnm(5)s(2)U34 oxidoreductase">
    <location>
        <begin position="254"/>
        <end position="639"/>
    </location>
</feature>
<accession>A1W6V9</accession>
<organism>
    <name type="scientific">Acidovorax sp. (strain JS42)</name>
    <dbReference type="NCBI Taxonomy" id="232721"/>
    <lineage>
        <taxon>Bacteria</taxon>
        <taxon>Pseudomonadati</taxon>
        <taxon>Pseudomonadota</taxon>
        <taxon>Betaproteobacteria</taxon>
        <taxon>Burkholderiales</taxon>
        <taxon>Comamonadaceae</taxon>
        <taxon>Acidovorax</taxon>
    </lineage>
</organism>
<evidence type="ECO:0000255" key="1">
    <source>
        <dbReference type="HAMAP-Rule" id="MF_01102"/>
    </source>
</evidence>
<dbReference type="EC" id="2.1.1.61" evidence="1"/>
<dbReference type="EC" id="1.5.-.-" evidence="1"/>
<dbReference type="EMBL" id="CP000539">
    <property type="protein sequence ID" value="ABM41984.1"/>
    <property type="molecule type" value="Genomic_DNA"/>
</dbReference>
<dbReference type="SMR" id="A1W6V9"/>
<dbReference type="STRING" id="232721.Ajs_1796"/>
<dbReference type="KEGG" id="ajs:Ajs_1796"/>
<dbReference type="eggNOG" id="COG0665">
    <property type="taxonomic scope" value="Bacteria"/>
</dbReference>
<dbReference type="eggNOG" id="COG4121">
    <property type="taxonomic scope" value="Bacteria"/>
</dbReference>
<dbReference type="HOGENOM" id="CLU_022427_1_0_4"/>
<dbReference type="Proteomes" id="UP000000645">
    <property type="component" value="Chromosome"/>
</dbReference>
<dbReference type="GO" id="GO:0005737">
    <property type="term" value="C:cytoplasm"/>
    <property type="evidence" value="ECO:0007669"/>
    <property type="project" value="UniProtKB-SubCell"/>
</dbReference>
<dbReference type="GO" id="GO:0050660">
    <property type="term" value="F:flavin adenine dinucleotide binding"/>
    <property type="evidence" value="ECO:0007669"/>
    <property type="project" value="UniProtKB-UniRule"/>
</dbReference>
<dbReference type="GO" id="GO:0016645">
    <property type="term" value="F:oxidoreductase activity, acting on the CH-NH group of donors"/>
    <property type="evidence" value="ECO:0007669"/>
    <property type="project" value="InterPro"/>
</dbReference>
<dbReference type="GO" id="GO:0004808">
    <property type="term" value="F:tRNA (5-methylaminomethyl-2-thiouridylate)(34)-methyltransferase activity"/>
    <property type="evidence" value="ECO:0007669"/>
    <property type="project" value="UniProtKB-EC"/>
</dbReference>
<dbReference type="GO" id="GO:0032259">
    <property type="term" value="P:methylation"/>
    <property type="evidence" value="ECO:0007669"/>
    <property type="project" value="UniProtKB-KW"/>
</dbReference>
<dbReference type="GO" id="GO:0002097">
    <property type="term" value="P:tRNA wobble base modification"/>
    <property type="evidence" value="ECO:0007669"/>
    <property type="project" value="UniProtKB-UniRule"/>
</dbReference>
<dbReference type="Gene3D" id="3.30.9.10">
    <property type="entry name" value="D-Amino Acid Oxidase, subunit A, domain 2"/>
    <property type="match status" value="1"/>
</dbReference>
<dbReference type="Gene3D" id="3.50.50.60">
    <property type="entry name" value="FAD/NAD(P)-binding domain"/>
    <property type="match status" value="1"/>
</dbReference>
<dbReference type="Gene3D" id="3.40.50.150">
    <property type="entry name" value="Vaccinia Virus protein VP39"/>
    <property type="match status" value="1"/>
</dbReference>
<dbReference type="HAMAP" id="MF_01102">
    <property type="entry name" value="MnmC"/>
    <property type="match status" value="1"/>
</dbReference>
<dbReference type="InterPro" id="IPR006076">
    <property type="entry name" value="FAD-dep_OxRdtase"/>
</dbReference>
<dbReference type="InterPro" id="IPR036188">
    <property type="entry name" value="FAD/NAD-bd_sf"/>
</dbReference>
<dbReference type="InterPro" id="IPR008471">
    <property type="entry name" value="MnmC-like_methylTransf"/>
</dbReference>
<dbReference type="InterPro" id="IPR029063">
    <property type="entry name" value="SAM-dependent_MTases_sf"/>
</dbReference>
<dbReference type="InterPro" id="IPR023032">
    <property type="entry name" value="tRNA_MAMT_biosynth_bifunc_MnmC"/>
</dbReference>
<dbReference type="InterPro" id="IPR047785">
    <property type="entry name" value="tRNA_MNMC2"/>
</dbReference>
<dbReference type="InterPro" id="IPR017610">
    <property type="entry name" value="tRNA_S-uridine_synth_MnmC_C"/>
</dbReference>
<dbReference type="NCBIfam" id="TIGR03197">
    <property type="entry name" value="MnmC_Cterm"/>
    <property type="match status" value="1"/>
</dbReference>
<dbReference type="NCBIfam" id="NF033855">
    <property type="entry name" value="tRNA_MNMC2"/>
    <property type="match status" value="1"/>
</dbReference>
<dbReference type="PANTHER" id="PTHR13847">
    <property type="entry name" value="SARCOSINE DEHYDROGENASE-RELATED"/>
    <property type="match status" value="1"/>
</dbReference>
<dbReference type="PANTHER" id="PTHR13847:SF283">
    <property type="entry name" value="TRNA 5-METHYLAMINOMETHYL-2-THIOURIDINE BIOSYNTHESIS BIFUNCTIONAL PROTEIN MNMC"/>
    <property type="match status" value="1"/>
</dbReference>
<dbReference type="Pfam" id="PF01266">
    <property type="entry name" value="DAO"/>
    <property type="match status" value="1"/>
</dbReference>
<dbReference type="Pfam" id="PF05430">
    <property type="entry name" value="Methyltransf_30"/>
    <property type="match status" value="1"/>
</dbReference>
<dbReference type="SUPFAM" id="SSF51905">
    <property type="entry name" value="FAD/NAD(P)-binding domain"/>
    <property type="match status" value="1"/>
</dbReference>
<name>MNMC_ACISJ</name>